<protein>
    <recommendedName>
        <fullName evidence="1">Formate-dependent phosphoribosylglycinamide formyltransferase</fullName>
        <ecNumber evidence="1">6.3.1.21</ecNumber>
    </recommendedName>
    <alternativeName>
        <fullName evidence="1">5'-phosphoribosylglycinamide transformylase 2</fullName>
    </alternativeName>
    <alternativeName>
        <fullName evidence="1">Formate-dependent GAR transformylase</fullName>
    </alternativeName>
    <alternativeName>
        <fullName evidence="1">GAR transformylase 2</fullName>
        <shortName evidence="1">GART 2</shortName>
    </alternativeName>
    <alternativeName>
        <fullName evidence="1">Non-folate glycinamide ribonucleotide transformylase</fullName>
    </alternativeName>
    <alternativeName>
        <fullName evidence="1">Phosphoribosylglycinamide formyltransferase 2</fullName>
    </alternativeName>
</protein>
<feature type="chain" id="PRO_0000319140" description="Formate-dependent phosphoribosylglycinamide formyltransferase">
    <location>
        <begin position="1"/>
        <end position="404"/>
    </location>
</feature>
<feature type="domain" description="ATP-grasp" evidence="1">
    <location>
        <begin position="123"/>
        <end position="318"/>
    </location>
</feature>
<feature type="binding site" evidence="1">
    <location>
        <begin position="25"/>
        <end position="26"/>
    </location>
    <ligand>
        <name>N(1)-(5-phospho-beta-D-ribosyl)glycinamide</name>
        <dbReference type="ChEBI" id="CHEBI:143788"/>
    </ligand>
</feature>
<feature type="binding site" evidence="1">
    <location>
        <position position="85"/>
    </location>
    <ligand>
        <name>N(1)-(5-phospho-beta-D-ribosyl)glycinamide</name>
        <dbReference type="ChEBI" id="CHEBI:143788"/>
    </ligand>
</feature>
<feature type="binding site" evidence="1">
    <location>
        <position position="118"/>
    </location>
    <ligand>
        <name>ATP</name>
        <dbReference type="ChEBI" id="CHEBI:30616"/>
    </ligand>
</feature>
<feature type="binding site" evidence="1">
    <location>
        <position position="159"/>
    </location>
    <ligand>
        <name>ATP</name>
        <dbReference type="ChEBI" id="CHEBI:30616"/>
    </ligand>
</feature>
<feature type="binding site" evidence="1">
    <location>
        <begin position="164"/>
        <end position="169"/>
    </location>
    <ligand>
        <name>ATP</name>
        <dbReference type="ChEBI" id="CHEBI:30616"/>
    </ligand>
</feature>
<feature type="binding site" evidence="1">
    <location>
        <begin position="199"/>
        <end position="202"/>
    </location>
    <ligand>
        <name>ATP</name>
        <dbReference type="ChEBI" id="CHEBI:30616"/>
    </ligand>
</feature>
<feature type="binding site" evidence="1">
    <location>
        <position position="207"/>
    </location>
    <ligand>
        <name>ATP</name>
        <dbReference type="ChEBI" id="CHEBI:30616"/>
    </ligand>
</feature>
<feature type="binding site" evidence="1">
    <location>
        <position position="277"/>
    </location>
    <ligand>
        <name>Mg(2+)</name>
        <dbReference type="ChEBI" id="CHEBI:18420"/>
    </ligand>
</feature>
<feature type="binding site" evidence="1">
    <location>
        <position position="289"/>
    </location>
    <ligand>
        <name>Mg(2+)</name>
        <dbReference type="ChEBI" id="CHEBI:18420"/>
    </ligand>
</feature>
<feature type="binding site" evidence="1">
    <location>
        <position position="296"/>
    </location>
    <ligand>
        <name>N(1)-(5-phospho-beta-D-ribosyl)glycinamide</name>
        <dbReference type="ChEBI" id="CHEBI:143788"/>
    </ligand>
</feature>
<feature type="binding site" evidence="1">
    <location>
        <position position="365"/>
    </location>
    <ligand>
        <name>N(1)-(5-phospho-beta-D-ribosyl)glycinamide</name>
        <dbReference type="ChEBI" id="CHEBI:143788"/>
    </ligand>
</feature>
<feature type="binding site" evidence="1">
    <location>
        <begin position="372"/>
        <end position="373"/>
    </location>
    <ligand>
        <name>N(1)-(5-phospho-beta-D-ribosyl)glycinamide</name>
        <dbReference type="ChEBI" id="CHEBI:143788"/>
    </ligand>
</feature>
<keyword id="KW-0067">ATP-binding</keyword>
<keyword id="KW-0436">Ligase</keyword>
<keyword id="KW-0460">Magnesium</keyword>
<keyword id="KW-0479">Metal-binding</keyword>
<keyword id="KW-0547">Nucleotide-binding</keyword>
<keyword id="KW-0658">Purine biosynthesis</keyword>
<gene>
    <name evidence="1" type="primary">purT</name>
    <name type="ordered locus">BMASAVP1_A1035</name>
</gene>
<name>PURT_BURMS</name>
<dbReference type="EC" id="6.3.1.21" evidence="1"/>
<dbReference type="EMBL" id="CP000526">
    <property type="protein sequence ID" value="ABM51287.1"/>
    <property type="molecule type" value="Genomic_DNA"/>
</dbReference>
<dbReference type="RefSeq" id="WP_004186479.1">
    <property type="nucleotide sequence ID" value="NC_008785.1"/>
</dbReference>
<dbReference type="SMR" id="A1V2C2"/>
<dbReference type="GeneID" id="92979633"/>
<dbReference type="KEGG" id="bmv:BMASAVP1_A1035"/>
<dbReference type="HOGENOM" id="CLU_011534_1_3_4"/>
<dbReference type="UniPathway" id="UPA00074">
    <property type="reaction ID" value="UER00127"/>
</dbReference>
<dbReference type="GO" id="GO:0005829">
    <property type="term" value="C:cytosol"/>
    <property type="evidence" value="ECO:0007669"/>
    <property type="project" value="TreeGrafter"/>
</dbReference>
<dbReference type="GO" id="GO:0005524">
    <property type="term" value="F:ATP binding"/>
    <property type="evidence" value="ECO:0007669"/>
    <property type="project" value="UniProtKB-UniRule"/>
</dbReference>
<dbReference type="GO" id="GO:0000287">
    <property type="term" value="F:magnesium ion binding"/>
    <property type="evidence" value="ECO:0007669"/>
    <property type="project" value="InterPro"/>
</dbReference>
<dbReference type="GO" id="GO:0043815">
    <property type="term" value="F:phosphoribosylglycinamide formyltransferase 2 activity"/>
    <property type="evidence" value="ECO:0007669"/>
    <property type="project" value="UniProtKB-UniRule"/>
</dbReference>
<dbReference type="GO" id="GO:0004644">
    <property type="term" value="F:phosphoribosylglycinamide formyltransferase activity"/>
    <property type="evidence" value="ECO:0007669"/>
    <property type="project" value="InterPro"/>
</dbReference>
<dbReference type="GO" id="GO:0006189">
    <property type="term" value="P:'de novo' IMP biosynthetic process"/>
    <property type="evidence" value="ECO:0007669"/>
    <property type="project" value="UniProtKB-UniRule"/>
</dbReference>
<dbReference type="FunFam" id="3.30.1490.20:FF:000013">
    <property type="entry name" value="Formate-dependent phosphoribosylglycinamide formyltransferase"/>
    <property type="match status" value="1"/>
</dbReference>
<dbReference type="FunFam" id="3.40.50.20:FF:000007">
    <property type="entry name" value="Formate-dependent phosphoribosylglycinamide formyltransferase"/>
    <property type="match status" value="1"/>
</dbReference>
<dbReference type="Gene3D" id="3.40.50.20">
    <property type="match status" value="1"/>
</dbReference>
<dbReference type="Gene3D" id="3.30.1490.20">
    <property type="entry name" value="ATP-grasp fold, A domain"/>
    <property type="match status" value="1"/>
</dbReference>
<dbReference type="Gene3D" id="3.30.470.20">
    <property type="entry name" value="ATP-grasp fold, B domain"/>
    <property type="match status" value="1"/>
</dbReference>
<dbReference type="HAMAP" id="MF_01643">
    <property type="entry name" value="PurT"/>
    <property type="match status" value="1"/>
</dbReference>
<dbReference type="InterPro" id="IPR011761">
    <property type="entry name" value="ATP-grasp"/>
</dbReference>
<dbReference type="InterPro" id="IPR003135">
    <property type="entry name" value="ATP-grasp_carboxylate-amine"/>
</dbReference>
<dbReference type="InterPro" id="IPR013815">
    <property type="entry name" value="ATP_grasp_subdomain_1"/>
</dbReference>
<dbReference type="InterPro" id="IPR016185">
    <property type="entry name" value="PreATP-grasp_dom_sf"/>
</dbReference>
<dbReference type="InterPro" id="IPR005862">
    <property type="entry name" value="PurT"/>
</dbReference>
<dbReference type="InterPro" id="IPR054350">
    <property type="entry name" value="PurT/PurK_preATP-grasp"/>
</dbReference>
<dbReference type="InterPro" id="IPR048740">
    <property type="entry name" value="PurT_C"/>
</dbReference>
<dbReference type="InterPro" id="IPR011054">
    <property type="entry name" value="Rudment_hybrid_motif"/>
</dbReference>
<dbReference type="NCBIfam" id="NF006766">
    <property type="entry name" value="PRK09288.1"/>
    <property type="match status" value="1"/>
</dbReference>
<dbReference type="NCBIfam" id="TIGR01142">
    <property type="entry name" value="purT"/>
    <property type="match status" value="1"/>
</dbReference>
<dbReference type="PANTHER" id="PTHR43055">
    <property type="entry name" value="FORMATE-DEPENDENT PHOSPHORIBOSYLGLYCINAMIDE FORMYLTRANSFERASE"/>
    <property type="match status" value="1"/>
</dbReference>
<dbReference type="PANTHER" id="PTHR43055:SF1">
    <property type="entry name" value="FORMATE-DEPENDENT PHOSPHORIBOSYLGLYCINAMIDE FORMYLTRANSFERASE"/>
    <property type="match status" value="1"/>
</dbReference>
<dbReference type="Pfam" id="PF02222">
    <property type="entry name" value="ATP-grasp"/>
    <property type="match status" value="1"/>
</dbReference>
<dbReference type="Pfam" id="PF21244">
    <property type="entry name" value="PurT_C"/>
    <property type="match status" value="1"/>
</dbReference>
<dbReference type="Pfam" id="PF22660">
    <property type="entry name" value="RS_preATP-grasp-like"/>
    <property type="match status" value="1"/>
</dbReference>
<dbReference type="SUPFAM" id="SSF56059">
    <property type="entry name" value="Glutathione synthetase ATP-binding domain-like"/>
    <property type="match status" value="1"/>
</dbReference>
<dbReference type="SUPFAM" id="SSF52440">
    <property type="entry name" value="PreATP-grasp domain"/>
    <property type="match status" value="1"/>
</dbReference>
<dbReference type="SUPFAM" id="SSF51246">
    <property type="entry name" value="Rudiment single hybrid motif"/>
    <property type="match status" value="1"/>
</dbReference>
<dbReference type="PROSITE" id="PS50975">
    <property type="entry name" value="ATP_GRASP"/>
    <property type="match status" value="1"/>
</dbReference>
<proteinExistence type="inferred from homology"/>
<reference key="1">
    <citation type="journal article" date="2010" name="Genome Biol. Evol.">
        <title>Continuing evolution of Burkholderia mallei through genome reduction and large-scale rearrangements.</title>
        <authorList>
            <person name="Losada L."/>
            <person name="Ronning C.M."/>
            <person name="DeShazer D."/>
            <person name="Woods D."/>
            <person name="Fedorova N."/>
            <person name="Kim H.S."/>
            <person name="Shabalina S.A."/>
            <person name="Pearson T.R."/>
            <person name="Brinkac L."/>
            <person name="Tan P."/>
            <person name="Nandi T."/>
            <person name="Crabtree J."/>
            <person name="Badger J."/>
            <person name="Beckstrom-Sternberg S."/>
            <person name="Saqib M."/>
            <person name="Schutzer S.E."/>
            <person name="Keim P."/>
            <person name="Nierman W.C."/>
        </authorList>
    </citation>
    <scope>NUCLEOTIDE SEQUENCE [LARGE SCALE GENOMIC DNA]</scope>
    <source>
        <strain>SAVP1</strain>
    </source>
</reference>
<accession>A1V2C2</accession>
<comment type="function">
    <text evidence="1">Involved in the de novo purine biosynthesis. Catalyzes the transfer of formate to 5-phospho-ribosyl-glycinamide (GAR), producing 5-phospho-ribosyl-N-formylglycinamide (FGAR). Formate is provided by PurU via hydrolysis of 10-formyl-tetrahydrofolate.</text>
</comment>
<comment type="catalytic activity">
    <reaction evidence="1">
        <text>N(1)-(5-phospho-beta-D-ribosyl)glycinamide + formate + ATP = N(2)-formyl-N(1)-(5-phospho-beta-D-ribosyl)glycinamide + ADP + phosphate + H(+)</text>
        <dbReference type="Rhea" id="RHEA:24829"/>
        <dbReference type="ChEBI" id="CHEBI:15378"/>
        <dbReference type="ChEBI" id="CHEBI:15740"/>
        <dbReference type="ChEBI" id="CHEBI:30616"/>
        <dbReference type="ChEBI" id="CHEBI:43474"/>
        <dbReference type="ChEBI" id="CHEBI:143788"/>
        <dbReference type="ChEBI" id="CHEBI:147286"/>
        <dbReference type="ChEBI" id="CHEBI:456216"/>
        <dbReference type="EC" id="6.3.1.21"/>
    </reaction>
    <physiologicalReaction direction="left-to-right" evidence="1">
        <dbReference type="Rhea" id="RHEA:24830"/>
    </physiologicalReaction>
</comment>
<comment type="pathway">
    <text evidence="1">Purine metabolism; IMP biosynthesis via de novo pathway; N(2)-formyl-N(1)-(5-phospho-D-ribosyl)glycinamide from N(1)-(5-phospho-D-ribosyl)glycinamide (formate route): step 1/1.</text>
</comment>
<comment type="subunit">
    <text evidence="1">Homodimer.</text>
</comment>
<comment type="similarity">
    <text evidence="1">Belongs to the PurK/PurT family.</text>
</comment>
<evidence type="ECO:0000255" key="1">
    <source>
        <dbReference type="HAMAP-Rule" id="MF_01643"/>
    </source>
</evidence>
<sequence length="404" mass="43097">MQIGQRLGTPLSPSATRVMLLGAGELGKEVIIALQRLGVEVIAVDRYPNAPGHQVAHRAHVIDMTDPDALRALVDAERPHLVVPEIEAIATDALAAIEAAGVCEVIPTARATQLTMNREGIRRLAAEELGLPTSPYAFAQSFDEFAAAVARIGFPCVVKPVMSSSGKGQSVLRSEADIEPAWRYAMAGGRVNHGRVIVEGFIRFDYEITQLTVRAIDPASGQTRTSFCAPIGHLQVAGDYVESWQPQPMSAKALERSRDIAHRVTSALGGRGIFGVELFVRGDDVWFSEVSPRPHDTGLVTLASQRQSEFELHARAILGLPVEPALATPAASAVIYGGLDEAGIAFEGVRDALAVPGADLRLFGKPESFAKRRMGVALATGANVDEARERAKRAAAAVRPVSAR</sequence>
<organism>
    <name type="scientific">Burkholderia mallei (strain SAVP1)</name>
    <dbReference type="NCBI Taxonomy" id="320388"/>
    <lineage>
        <taxon>Bacteria</taxon>
        <taxon>Pseudomonadati</taxon>
        <taxon>Pseudomonadota</taxon>
        <taxon>Betaproteobacteria</taxon>
        <taxon>Burkholderiales</taxon>
        <taxon>Burkholderiaceae</taxon>
        <taxon>Burkholderia</taxon>
        <taxon>pseudomallei group</taxon>
    </lineage>
</organism>